<name>KCY_CERS4</name>
<keyword id="KW-0067">ATP-binding</keyword>
<keyword id="KW-0963">Cytoplasm</keyword>
<keyword id="KW-0418">Kinase</keyword>
<keyword id="KW-0547">Nucleotide-binding</keyword>
<keyword id="KW-1185">Reference proteome</keyword>
<keyword id="KW-0808">Transferase</keyword>
<sequence>MRFTVAIDGPAAAGKGTISRAVAAHFRFAHLDTGLLYRAVGAKVTEGADPVAAAEGLDLADLARGDLRSAEAGQAASRVAALPEVRAALVAFQRSFARREGGAVLDGRDIGTVICPEAEVKLFVTASDEERARRRWLELAAKGGAQSEAEILADLRERDRRDREREAAPLRPAPDALLLDTTELTIDAAVNKAIEAIELRQAQGRE</sequence>
<protein>
    <recommendedName>
        <fullName evidence="1">Cytidylate kinase</fullName>
        <shortName evidence="1">CK</shortName>
        <ecNumber evidence="1">2.7.4.25</ecNumber>
    </recommendedName>
    <alternativeName>
        <fullName evidence="1">Cytidine monophosphate kinase</fullName>
        <shortName evidence="1">CMP kinase</shortName>
    </alternativeName>
</protein>
<reference key="1">
    <citation type="journal article" date="1999" name="Genetics">
        <title>Multiple chromosomes in bacteria. The yin and yang of trp gene localization in Rhodobacter sphaeroides 2.4.1.</title>
        <authorList>
            <person name="Mackenzie C."/>
            <person name="Simmons A.E."/>
            <person name="Kaplan S."/>
        </authorList>
    </citation>
    <scope>NUCLEOTIDE SEQUENCE [GENOMIC DNA]</scope>
</reference>
<reference key="2">
    <citation type="submission" date="2005-09" db="EMBL/GenBank/DDBJ databases">
        <title>Complete sequence of chromosome 2 of Rhodobacter sphaeroides 2.4.1.</title>
        <authorList>
            <person name="Copeland A."/>
            <person name="Lucas S."/>
            <person name="Lapidus A."/>
            <person name="Barry K."/>
            <person name="Detter J.C."/>
            <person name="Glavina T."/>
            <person name="Hammon N."/>
            <person name="Israni S."/>
            <person name="Pitluck S."/>
            <person name="Richardson P."/>
            <person name="Mackenzie C."/>
            <person name="Choudhary M."/>
            <person name="Larimer F."/>
            <person name="Hauser L.J."/>
            <person name="Land M."/>
            <person name="Donohue T.J."/>
            <person name="Kaplan S."/>
        </authorList>
    </citation>
    <scope>NUCLEOTIDE SEQUENCE [LARGE SCALE GENOMIC DNA]</scope>
    <source>
        <strain>ATCC 17023 / DSM 158 / JCM 6121 / CCUG 31486 / LMG 2827 / NBRC 12203 / NCIMB 8253 / ATH 2.4.1.</strain>
    </source>
</reference>
<comment type="catalytic activity">
    <reaction evidence="1">
        <text>CMP + ATP = CDP + ADP</text>
        <dbReference type="Rhea" id="RHEA:11600"/>
        <dbReference type="ChEBI" id="CHEBI:30616"/>
        <dbReference type="ChEBI" id="CHEBI:58069"/>
        <dbReference type="ChEBI" id="CHEBI:60377"/>
        <dbReference type="ChEBI" id="CHEBI:456216"/>
        <dbReference type="EC" id="2.7.4.25"/>
    </reaction>
</comment>
<comment type="catalytic activity">
    <reaction evidence="1">
        <text>dCMP + ATP = dCDP + ADP</text>
        <dbReference type="Rhea" id="RHEA:25094"/>
        <dbReference type="ChEBI" id="CHEBI:30616"/>
        <dbReference type="ChEBI" id="CHEBI:57566"/>
        <dbReference type="ChEBI" id="CHEBI:58593"/>
        <dbReference type="ChEBI" id="CHEBI:456216"/>
        <dbReference type="EC" id="2.7.4.25"/>
    </reaction>
</comment>
<comment type="subcellular location">
    <subcellularLocation>
        <location evidence="1">Cytoplasm</location>
    </subcellularLocation>
</comment>
<comment type="similarity">
    <text evidence="1">Belongs to the cytidylate kinase family. Type 1 subfamily.</text>
</comment>
<feature type="chain" id="PRO_0000131964" description="Cytidylate kinase">
    <location>
        <begin position="1"/>
        <end position="206"/>
    </location>
</feature>
<feature type="binding site" evidence="1">
    <location>
        <begin position="9"/>
        <end position="17"/>
    </location>
    <ligand>
        <name>ATP</name>
        <dbReference type="ChEBI" id="CHEBI:30616"/>
    </ligand>
</feature>
<organism>
    <name type="scientific">Cereibacter sphaeroides (strain ATCC 17023 / DSM 158 / JCM 6121 / CCUG 31486 / LMG 2827 / NBRC 12203 / NCIMB 8253 / ATH 2.4.1.)</name>
    <name type="common">Rhodobacter sphaeroides</name>
    <dbReference type="NCBI Taxonomy" id="272943"/>
    <lineage>
        <taxon>Bacteria</taxon>
        <taxon>Pseudomonadati</taxon>
        <taxon>Pseudomonadota</taxon>
        <taxon>Alphaproteobacteria</taxon>
        <taxon>Rhodobacterales</taxon>
        <taxon>Paracoccaceae</taxon>
        <taxon>Cereibacter</taxon>
    </lineage>
</organism>
<gene>
    <name evidence="1" type="primary">cmk</name>
    <name type="ordered locus">RHOS4_36260</name>
    <name type="ORF">RSP_3591</name>
</gene>
<evidence type="ECO:0000255" key="1">
    <source>
        <dbReference type="HAMAP-Rule" id="MF_00238"/>
    </source>
</evidence>
<accession>Q9X4E0</accession>
<accession>Q3IW90</accession>
<dbReference type="EC" id="2.7.4.25" evidence="1"/>
<dbReference type="EMBL" id="AF107093">
    <property type="protein sequence ID" value="AAD29262.1"/>
    <property type="molecule type" value="Genomic_DNA"/>
</dbReference>
<dbReference type="EMBL" id="CP000144">
    <property type="protein sequence ID" value="ABA81194.1"/>
    <property type="molecule type" value="Genomic_DNA"/>
</dbReference>
<dbReference type="RefSeq" id="WP_011339438.1">
    <property type="nucleotide sequence ID" value="NC_007494.2"/>
</dbReference>
<dbReference type="RefSeq" id="YP_355095.1">
    <property type="nucleotide sequence ID" value="NC_007494.2"/>
</dbReference>
<dbReference type="SMR" id="Q9X4E0"/>
<dbReference type="STRING" id="272943.RSP_3591"/>
<dbReference type="EnsemblBacteria" id="ABA81194">
    <property type="protein sequence ID" value="ABA81194"/>
    <property type="gene ID" value="RSP_3591"/>
</dbReference>
<dbReference type="GeneID" id="3722108"/>
<dbReference type="KEGG" id="rsp:RSP_3591"/>
<dbReference type="PATRIC" id="fig|272943.9.peg.4027"/>
<dbReference type="eggNOG" id="COG0283">
    <property type="taxonomic scope" value="Bacteria"/>
</dbReference>
<dbReference type="OrthoDB" id="9807434at2"/>
<dbReference type="PhylomeDB" id="Q9X4E0"/>
<dbReference type="Proteomes" id="UP000002703">
    <property type="component" value="Chromosome 2"/>
</dbReference>
<dbReference type="GO" id="GO:0005737">
    <property type="term" value="C:cytoplasm"/>
    <property type="evidence" value="ECO:0007669"/>
    <property type="project" value="UniProtKB-SubCell"/>
</dbReference>
<dbReference type="GO" id="GO:0005524">
    <property type="term" value="F:ATP binding"/>
    <property type="evidence" value="ECO:0007669"/>
    <property type="project" value="UniProtKB-UniRule"/>
</dbReference>
<dbReference type="GO" id="GO:0036430">
    <property type="term" value="F:CMP kinase activity"/>
    <property type="evidence" value="ECO:0007669"/>
    <property type="project" value="RHEA"/>
</dbReference>
<dbReference type="GO" id="GO:0036431">
    <property type="term" value="F:dCMP kinase activity"/>
    <property type="evidence" value="ECO:0007669"/>
    <property type="project" value="RHEA"/>
</dbReference>
<dbReference type="GO" id="GO:0006220">
    <property type="term" value="P:pyrimidine nucleotide metabolic process"/>
    <property type="evidence" value="ECO:0007669"/>
    <property type="project" value="UniProtKB-UniRule"/>
</dbReference>
<dbReference type="CDD" id="cd02020">
    <property type="entry name" value="CMPK"/>
    <property type="match status" value="1"/>
</dbReference>
<dbReference type="Gene3D" id="3.40.50.300">
    <property type="entry name" value="P-loop containing nucleotide triphosphate hydrolases"/>
    <property type="match status" value="1"/>
</dbReference>
<dbReference type="HAMAP" id="MF_00238">
    <property type="entry name" value="Cytidyl_kinase_type1"/>
    <property type="match status" value="1"/>
</dbReference>
<dbReference type="InterPro" id="IPR003136">
    <property type="entry name" value="Cytidylate_kin"/>
</dbReference>
<dbReference type="InterPro" id="IPR011994">
    <property type="entry name" value="Cytidylate_kinase_dom"/>
</dbReference>
<dbReference type="InterPro" id="IPR027417">
    <property type="entry name" value="P-loop_NTPase"/>
</dbReference>
<dbReference type="Pfam" id="PF02224">
    <property type="entry name" value="Cytidylate_kin"/>
    <property type="match status" value="2"/>
</dbReference>
<dbReference type="SUPFAM" id="SSF52540">
    <property type="entry name" value="P-loop containing nucleoside triphosphate hydrolases"/>
    <property type="match status" value="1"/>
</dbReference>
<proteinExistence type="inferred from homology"/>